<reference key="1">
    <citation type="submission" date="1997-12" db="EMBL/GenBank/DDBJ databases">
        <title>Completing of squid (Loligo breekeri) mitochondrial genome sequencing.</title>
        <authorList>
            <person name="Tomita K."/>
            <person name="Ueda T."/>
            <person name="Watanabe K."/>
        </authorList>
    </citation>
    <scope>NUCLEOTIDE SEQUENCE [GENOMIC DNA]</scope>
</reference>
<keyword id="KW-0249">Electron transport</keyword>
<keyword id="KW-0472">Membrane</keyword>
<keyword id="KW-0496">Mitochondrion</keyword>
<keyword id="KW-0520">NAD</keyword>
<keyword id="KW-0679">Respiratory chain</keyword>
<keyword id="KW-1278">Translocase</keyword>
<keyword id="KW-0812">Transmembrane</keyword>
<keyword id="KW-1133">Transmembrane helix</keyword>
<keyword id="KW-0813">Transport</keyword>
<keyword id="KW-0830">Ubiquinone</keyword>
<organism>
    <name type="scientific">Heterololigo bleekeri</name>
    <name type="common">Spear squid</name>
    <name type="synonym">Loligo bleekeri</name>
    <dbReference type="NCBI Taxonomy" id="1423826"/>
    <lineage>
        <taxon>Eukaryota</taxon>
        <taxon>Metazoa</taxon>
        <taxon>Spiralia</taxon>
        <taxon>Lophotrochozoa</taxon>
        <taxon>Mollusca</taxon>
        <taxon>Cephalopoda</taxon>
        <taxon>Coleoidea</taxon>
        <taxon>Decapodiformes</taxon>
        <taxon>Myopsida</taxon>
        <taxon>Loliginidae</taxon>
        <taxon>Heterololigo</taxon>
    </lineage>
</organism>
<feature type="chain" id="PRO_0000118297" description="NADH-ubiquinone oxidoreductase chain 6">
    <location>
        <begin position="1"/>
        <end position="168"/>
    </location>
</feature>
<feature type="transmembrane region" description="Helical" evidence="2">
    <location>
        <begin position="26"/>
        <end position="46"/>
    </location>
</feature>
<feature type="transmembrane region" description="Helical" evidence="2">
    <location>
        <begin position="52"/>
        <end position="72"/>
    </location>
</feature>
<feature type="transmembrane region" description="Helical" evidence="2">
    <location>
        <begin position="82"/>
        <end position="102"/>
    </location>
</feature>
<feature type="transmembrane region" description="Helical" evidence="2">
    <location>
        <begin position="111"/>
        <end position="131"/>
    </location>
</feature>
<feature type="transmembrane region" description="Helical" evidence="2">
    <location>
        <begin position="134"/>
        <end position="154"/>
    </location>
</feature>
<name>NU6M_HETBL</name>
<protein>
    <recommendedName>
        <fullName>NADH-ubiquinone oxidoreductase chain 6</fullName>
        <ecNumber>7.1.1.2</ecNumber>
    </recommendedName>
    <alternativeName>
        <fullName>NADH dehydrogenase subunit 6</fullName>
    </alternativeName>
</protein>
<gene>
    <name type="primary">ND6</name>
</gene>
<geneLocation type="mitochondrion"/>
<evidence type="ECO:0000250" key="1"/>
<evidence type="ECO:0000255" key="2"/>
<evidence type="ECO:0000305" key="3"/>
<sequence length="168" mass="19301">MSLLFMISVGFSLSSLSMMVIQPLSLGLMLMLMVLCVSGLTSLIIFSWYGYLLFLVYVGGMLVMFMYVISLIPNLIFLSNKVFAYFFFIFFGFMMMNFFVMKELVSVEVKSMSLFDYGYMSMGGSGIIMLYDNFFCYVLLAVILLFVLISVVKICYYCEGPLRVFKFK</sequence>
<accession>O47478</accession>
<proteinExistence type="inferred from homology"/>
<dbReference type="EC" id="7.1.1.2"/>
<dbReference type="EMBL" id="AB009838">
    <property type="protein sequence ID" value="BAA24061.1"/>
    <property type="molecule type" value="Genomic_DNA"/>
</dbReference>
<dbReference type="EMBL" id="AB029616">
    <property type="protein sequence ID" value="BAB03648.1"/>
    <property type="molecule type" value="Genomic_DNA"/>
</dbReference>
<dbReference type="RefSeq" id="NP_062836.1">
    <property type="nucleotide sequence ID" value="NC_002507.1"/>
</dbReference>
<dbReference type="SMR" id="O47478"/>
<dbReference type="GeneID" id="809444"/>
<dbReference type="CTD" id="4541"/>
<dbReference type="GO" id="GO:0031966">
    <property type="term" value="C:mitochondrial membrane"/>
    <property type="evidence" value="ECO:0007669"/>
    <property type="project" value="UniProtKB-SubCell"/>
</dbReference>
<dbReference type="GO" id="GO:0008137">
    <property type="term" value="F:NADH dehydrogenase (ubiquinone) activity"/>
    <property type="evidence" value="ECO:0007669"/>
    <property type="project" value="UniProtKB-EC"/>
</dbReference>
<comment type="function">
    <text evidence="1">Core subunit of the mitochondrial membrane respiratory chain NADH dehydrogenase (Complex I) that is believed to belong to the minimal assembly required for catalysis. Complex I functions in the transfer of electrons from NADH to the respiratory chain. The immediate electron acceptor for the enzyme is believed to be ubiquinone (By similarity).</text>
</comment>
<comment type="catalytic activity">
    <reaction>
        <text>a ubiquinone + NADH + 5 H(+)(in) = a ubiquinol + NAD(+) + 4 H(+)(out)</text>
        <dbReference type="Rhea" id="RHEA:29091"/>
        <dbReference type="Rhea" id="RHEA-COMP:9565"/>
        <dbReference type="Rhea" id="RHEA-COMP:9566"/>
        <dbReference type="ChEBI" id="CHEBI:15378"/>
        <dbReference type="ChEBI" id="CHEBI:16389"/>
        <dbReference type="ChEBI" id="CHEBI:17976"/>
        <dbReference type="ChEBI" id="CHEBI:57540"/>
        <dbReference type="ChEBI" id="CHEBI:57945"/>
        <dbReference type="EC" id="7.1.1.2"/>
    </reaction>
</comment>
<comment type="subcellular location">
    <subcellularLocation>
        <location evidence="3">Mitochondrion membrane</location>
        <topology evidence="3">Multi-pass membrane protein</topology>
    </subcellularLocation>
</comment>
<comment type="similarity">
    <text evidence="3">Belongs to the complex I subunit 6 family.</text>
</comment>